<accession>Q87SZ5</accession>
<gene>
    <name evidence="1" type="primary">rpmD</name>
    <name type="ordered locus">VP0275</name>
</gene>
<organism>
    <name type="scientific">Vibrio parahaemolyticus serotype O3:K6 (strain RIMD 2210633)</name>
    <dbReference type="NCBI Taxonomy" id="223926"/>
    <lineage>
        <taxon>Bacteria</taxon>
        <taxon>Pseudomonadati</taxon>
        <taxon>Pseudomonadota</taxon>
        <taxon>Gammaproteobacteria</taxon>
        <taxon>Vibrionales</taxon>
        <taxon>Vibrionaceae</taxon>
        <taxon>Vibrio</taxon>
    </lineage>
</organism>
<protein>
    <recommendedName>
        <fullName evidence="1">Large ribosomal subunit protein uL30</fullName>
    </recommendedName>
    <alternativeName>
        <fullName evidence="2">50S ribosomal protein L30</fullName>
    </alternativeName>
</protein>
<comment type="subunit">
    <text evidence="1">Part of the 50S ribosomal subunit.</text>
</comment>
<comment type="similarity">
    <text evidence="1">Belongs to the universal ribosomal protein uL30 family.</text>
</comment>
<name>RL30_VIBPA</name>
<evidence type="ECO:0000255" key="1">
    <source>
        <dbReference type="HAMAP-Rule" id="MF_01371"/>
    </source>
</evidence>
<evidence type="ECO:0000305" key="2"/>
<feature type="chain" id="PRO_0000273886" description="Large ribosomal subunit protein uL30">
    <location>
        <begin position="1"/>
        <end position="58"/>
    </location>
</feature>
<dbReference type="EMBL" id="BA000031">
    <property type="protein sequence ID" value="BAC58538.1"/>
    <property type="molecule type" value="Genomic_DNA"/>
</dbReference>
<dbReference type="RefSeq" id="NP_796654.1">
    <property type="nucleotide sequence ID" value="NC_004603.1"/>
</dbReference>
<dbReference type="RefSeq" id="WP_000201159.1">
    <property type="nucleotide sequence ID" value="NC_004603.1"/>
</dbReference>
<dbReference type="SMR" id="Q87SZ5"/>
<dbReference type="GeneID" id="96872481"/>
<dbReference type="KEGG" id="vpa:VP0275"/>
<dbReference type="PATRIC" id="fig|223926.6.peg.266"/>
<dbReference type="eggNOG" id="COG1841">
    <property type="taxonomic scope" value="Bacteria"/>
</dbReference>
<dbReference type="HOGENOM" id="CLU_131047_1_4_6"/>
<dbReference type="PRO" id="PR:Q87SZ5"/>
<dbReference type="Proteomes" id="UP000002493">
    <property type="component" value="Chromosome 1"/>
</dbReference>
<dbReference type="GO" id="GO:0022625">
    <property type="term" value="C:cytosolic large ribosomal subunit"/>
    <property type="evidence" value="ECO:0007669"/>
    <property type="project" value="TreeGrafter"/>
</dbReference>
<dbReference type="GO" id="GO:0003735">
    <property type="term" value="F:structural constituent of ribosome"/>
    <property type="evidence" value="ECO:0007669"/>
    <property type="project" value="InterPro"/>
</dbReference>
<dbReference type="GO" id="GO:0006412">
    <property type="term" value="P:translation"/>
    <property type="evidence" value="ECO:0007669"/>
    <property type="project" value="UniProtKB-UniRule"/>
</dbReference>
<dbReference type="CDD" id="cd01658">
    <property type="entry name" value="Ribosomal_L30"/>
    <property type="match status" value="1"/>
</dbReference>
<dbReference type="FunFam" id="3.30.1390.20:FF:000001">
    <property type="entry name" value="50S ribosomal protein L30"/>
    <property type="match status" value="1"/>
</dbReference>
<dbReference type="Gene3D" id="3.30.1390.20">
    <property type="entry name" value="Ribosomal protein L30, ferredoxin-like fold domain"/>
    <property type="match status" value="1"/>
</dbReference>
<dbReference type="HAMAP" id="MF_01371_B">
    <property type="entry name" value="Ribosomal_uL30_B"/>
    <property type="match status" value="1"/>
</dbReference>
<dbReference type="InterPro" id="IPR036919">
    <property type="entry name" value="Ribo_uL30_ferredoxin-like_sf"/>
</dbReference>
<dbReference type="InterPro" id="IPR005996">
    <property type="entry name" value="Ribosomal_uL30_bac-type"/>
</dbReference>
<dbReference type="InterPro" id="IPR018038">
    <property type="entry name" value="Ribosomal_uL30_CS"/>
</dbReference>
<dbReference type="InterPro" id="IPR016082">
    <property type="entry name" value="Ribosomal_uL30_ferredoxin-like"/>
</dbReference>
<dbReference type="NCBIfam" id="TIGR01308">
    <property type="entry name" value="rpmD_bact"/>
    <property type="match status" value="1"/>
</dbReference>
<dbReference type="PANTHER" id="PTHR15892:SF2">
    <property type="entry name" value="LARGE RIBOSOMAL SUBUNIT PROTEIN UL30M"/>
    <property type="match status" value="1"/>
</dbReference>
<dbReference type="PANTHER" id="PTHR15892">
    <property type="entry name" value="MITOCHONDRIAL RIBOSOMAL PROTEIN L30"/>
    <property type="match status" value="1"/>
</dbReference>
<dbReference type="Pfam" id="PF00327">
    <property type="entry name" value="Ribosomal_L30"/>
    <property type="match status" value="1"/>
</dbReference>
<dbReference type="PIRSF" id="PIRSF002211">
    <property type="entry name" value="Ribosomal_L30_bac-type"/>
    <property type="match status" value="1"/>
</dbReference>
<dbReference type="SUPFAM" id="SSF55129">
    <property type="entry name" value="Ribosomal protein L30p/L7e"/>
    <property type="match status" value="1"/>
</dbReference>
<dbReference type="PROSITE" id="PS00634">
    <property type="entry name" value="RIBOSOMAL_L30"/>
    <property type="match status" value="1"/>
</dbReference>
<reference key="1">
    <citation type="journal article" date="2003" name="Lancet">
        <title>Genome sequence of Vibrio parahaemolyticus: a pathogenic mechanism distinct from that of V. cholerae.</title>
        <authorList>
            <person name="Makino K."/>
            <person name="Oshima K."/>
            <person name="Kurokawa K."/>
            <person name="Yokoyama K."/>
            <person name="Uda T."/>
            <person name="Tagomori K."/>
            <person name="Iijima Y."/>
            <person name="Najima M."/>
            <person name="Nakano M."/>
            <person name="Yamashita A."/>
            <person name="Kubota Y."/>
            <person name="Kimura S."/>
            <person name="Yasunaga T."/>
            <person name="Honda T."/>
            <person name="Shinagawa H."/>
            <person name="Hattori M."/>
            <person name="Iida T."/>
        </authorList>
    </citation>
    <scope>NUCLEOTIDE SEQUENCE [LARGE SCALE GENOMIC DNA]</scope>
    <source>
        <strain>RIMD 2210633</strain>
    </source>
</reference>
<keyword id="KW-0687">Ribonucleoprotein</keyword>
<keyword id="KW-0689">Ribosomal protein</keyword>
<proteinExistence type="inferred from homology"/>
<sequence length="58" mass="6584">MATIKVTQTKSSIGRLPKHKATLRGLGLRKINHTVELEDTPCVRGMINKVYYMVKVEE</sequence>